<sequence length="1713" mass="166884">MFNRFNKLQAALALVLYSQSALGQYYTSSSIASNSSTAVSSTSSGSVSISSSIELTSSTSDVSSSLTELTSSFTEVSSSIAPSTSSSEVSSSITSSGSSVSGSSSITSSGSSVSSSSPYDERFNSLDLSVHVSAGFSAGVSVGLEPSATTASVTTTLSPYDERVNLIELGVYVSDMRAHLVEYLLFQAAHSTEPHPTEIAAAFLDHGDFTTRLTGISGDEVTRMITGVPWYSTRLKPAISEALAKDGIYTAIPTSTSTTSDTYISSSSPSQVTSSAEPTTVSGVTSSVEPTRSSQVTSSAEPTTVSEITSSAEPLSSSKATTSAESISSNQITISSELIVSSVITSSSEIPSSIEVLTSSGISSSVEPTSLVGPSSDESISSTESLSATSTPLAVSSTVVTSSTDSVSPNIPFSEISSSPESSTAITSGSSSATESGSSVSGSTSATESGSSASGSSSATESGSSVSGSTSATESGSASSVPSSSGSVTESGSSSSASESSITQSGTASGSSVSSTSGSVTQSGSSVSGSSASSAPGISSSIPQSTSSASTASGSITSGTLTSITSGSSSATESGSSVSGSSSATESGSSVSGSTSATESGSSVSGSTSATESGSSASGSSSATESGSSVSGSTSATESGSSVSGSTSATESGSSASGSSSATESGSASSVPSSSGSVTESGSSSSASESSITQSGTASGSSASSTSGSVTQSGSSVSGSSASSAPGISSSIPQSTSSASTASGSITSGTLTSITSGSSSATESGSSASGSSSATESGSSVSGSTSATESGSSVSGSTSATESGSSASGSSSATESGSSVSGSTSATESGSSASGSSSATESGSASSVPSSSGSVTESGSSSSASESSITQSGTASGSSASSTSGSVTQSGSSVSGSSASSTSGSVTQSGSSVSGSSASSAPGISSSIPQSTSSASTASGSITSGTLTSITSSASSASATASNSLSSSDGTIYLPTTTISGDLTLTGKVIATEGVVVAAGAKLTLLDGDKYSFSADLKVYGDLLVKKSKETYPGTEFDISGENFDVTGNFNAEESAATSASIYSFTPSSFDNSGDISLSLSKSKKGEVTFSPYSNSGAFSFSNAILNGGSVSGLQRRDDTEGSVNNGEINLDNGSTYVIVEPVSGKGTVNIISGNLYLHYPDTFTGQTVVFKGEGVLAVDPTESNTTPIPVVGYTGENQIAITADVTALSYDSATGVLTATQGNSQFSFSIGTGFSSSGFNVSEGTFAGAYAYYLNYGGVVASSATPSSTSTTSGATNSTSGSTSFGASVTGSTASTSFGASVTGSTASTLISGSPSVYTTTLTYATTTSTVVVSCSETTDSNGNVYTITTTVPCSSTTATITSCDETGCHVTTSTGTVATETVSSKSYTTVTVTHCDNNGCNTKTVTSEAPEATTTTVSPKTYTTATVTQCDDNGCSTKTVTSECPEETSATTTSPKSYTTVTVTHCDDNGCNTKTVTSEAPEATTTTVSPKTYTTATVTQCDDNGCSTKTVTSECPEETSATTTSPKSYTTVTVTHCDDNGCNTKTVTSEAPEATTTTVSPKTYTTATVTQCDDNGCSTKTVTSEAPKETSETSETSAAPKTYTTATVTQCDDNGCNVKIITSQIPEATSTVTATSASPKSYTTVTSEGSKATSLTTAISKASSAISTYSKSAAPIKTSTGIIVQSEGIAAGLNANTLNALVGIFVLAFFN</sequence>
<gene>
    <name type="primary">AWA1</name>
    <name type="ORF">SYK7_061821</name>
</gene>
<comment type="function">
    <text>Involved in cell wall organization and biosynthesis. Confers cell surface hydrophobicity (CSH).</text>
</comment>
<comment type="subcellular location">
    <subcellularLocation>
        <location evidence="3">Secreted</location>
        <location evidence="3">Cell wall</location>
    </subcellularLocation>
    <subcellularLocation>
        <location evidence="3">Membrane</location>
        <topology evidence="3">Lipid-anchor</topology>
        <topology evidence="3">GPI-anchor</topology>
    </subcellularLocation>
    <text>Covalently-linked GPI-modified cell wall protein (GPI-CWP).</text>
</comment>
<comment type="PTM">
    <text>The GPI-anchor is attached to the protein in the endoplasmic reticulum and serves to target the protein to the cell surface. There, the glucosamine-inositol phospholipid moiety is cleaved off and the GPI-modified mannoprotein is covalently attached via its lipidless GPI glycan remnant to the 1,6-beta-glucan of the outer cell wall layer.</text>
</comment>
<comment type="polymorphism">
    <text>Half of the downstream region (residues 1035 to 1713) of the AWA1 gene was lost in the nonfoaming strain K701 due to a chromosomal recombination event.</text>
</comment>
<comment type="biotechnology">
    <text evidence="3">Responsible for the thick foam layer formation on the sake mash during the fermentation process.</text>
</comment>
<comment type="miscellaneous">
    <text>'Awa' means 'foam' in Japanese.</text>
</comment>
<comment type="similarity">
    <text evidence="4">Belongs to the SRP1/TIP1 family.</text>
</comment>
<comment type="online information" name="Protein Spotlight">
    <link uri="https://www.proteinspotlight.org/back_issues/078"/>
    <text>Of froth and haze - Issue 78 of January 2007</text>
</comment>
<proteinExistence type="evidence at protein level"/>
<reference key="1">
    <citation type="journal article" date="2002" name="Appl. Environ. Microbiol.">
        <title>The Awa1 gene is required for the foam-forming phenotype and cell surface hydrophobicity of sake yeast.</title>
        <authorList>
            <person name="Shimoi H."/>
            <person name="Sakamoto K."/>
            <person name="Okuda M."/>
            <person name="Atthi R."/>
            <person name="Iwashita K."/>
            <person name="Ito K."/>
        </authorList>
    </citation>
    <scope>NUCLEOTIDE SEQUENCE [GENOMIC DNA]</scope>
    <scope>SUBCELLULAR LOCATION</scope>
    <scope>BIOTECHNOLOGY</scope>
    <source>
        <strain>Kyokai no. 7 / NBRC 101557</strain>
    </source>
</reference>
<reference key="2">
    <citation type="journal article" date="2004" name="J. Biosci. Bioeng.">
        <title>Cloning and analysis of the AWA1 gene of a nonfoaming mutant of a sake Yeast.</title>
        <authorList>
            <person name="Miyashita K."/>
            <person name="Sakamoto K."/>
            <person name="Kitagaki H."/>
            <person name="Iwashita K."/>
            <person name="Ito K."/>
            <person name="Shimoi H."/>
        </authorList>
    </citation>
    <scope>NUCLEOTIDE SEQUENCE [GENOMIC DNA]</scope>
    <source>
        <strain>Kyokai no. 7 / NBRC 101557</strain>
        <strain>Kyokai no. 701</strain>
    </source>
</reference>
<reference key="3">
    <citation type="journal article" date="2011" name="DNA Res.">
        <title>Whole-genome sequencing of sake yeast Saccharomyces cerevisiae Kyokai no. 7.</title>
        <authorList>
            <person name="Akao T."/>
            <person name="Yashiro I."/>
            <person name="Hosoyama A."/>
            <person name="Kitagaki H."/>
            <person name="Horikawa H."/>
            <person name="Watanabe D."/>
            <person name="Akada R."/>
            <person name="Ando Y."/>
            <person name="Harashima S."/>
            <person name="Inoue T."/>
            <person name="Inoue Y."/>
            <person name="Kajiwara S."/>
            <person name="Kitamoto K."/>
            <person name="Kitamoto N."/>
            <person name="Kobayashi O."/>
            <person name="Kuhara S."/>
            <person name="Masubuchi T."/>
            <person name="Mizoguchi H."/>
            <person name="Nakao Y."/>
            <person name="Nakazato A."/>
            <person name="Namise M."/>
            <person name="Oba T."/>
            <person name="Ogata T."/>
            <person name="Ohta A."/>
            <person name="Sato M."/>
            <person name="Shibasaki S."/>
            <person name="Takatsume Y."/>
            <person name="Tanimoto S."/>
            <person name="Tsuboi H."/>
            <person name="Nishimura A."/>
            <person name="Yoda K."/>
            <person name="Ishikawa T."/>
            <person name="Iwashita K."/>
            <person name="Fujita N."/>
            <person name="Shimoi H."/>
        </authorList>
    </citation>
    <scope>NUCLEOTIDE SEQUENCE [LARGE SCALE GENOMIC DNA]</scope>
    <source>
        <strain>Kyokai no. 7 / NBRC 101557</strain>
    </source>
</reference>
<dbReference type="EMBL" id="AB071164">
    <property type="protein sequence ID" value="BAB85832.1"/>
    <property type="molecule type" value="Genomic_DNA"/>
</dbReference>
<dbReference type="EMBL" id="AB110100">
    <property type="protein sequence ID" value="BAD06576.1"/>
    <property type="molecule type" value="Genomic_DNA"/>
</dbReference>
<dbReference type="EMBL" id="AB110101">
    <property type="protein sequence ID" value="BAD06577.1"/>
    <property type="molecule type" value="Genomic_DNA"/>
</dbReference>
<dbReference type="EMBL" id="DG000051">
    <property type="protein sequence ID" value="GAA26176.1"/>
    <property type="molecule type" value="Genomic_DNA"/>
</dbReference>
<dbReference type="SMR" id="Q8TGE1"/>
<dbReference type="GlyCosmos" id="Q8TGE1">
    <property type="glycosylation" value="4 sites, No reported glycans"/>
</dbReference>
<dbReference type="HOGENOM" id="CLU_240507_0_0_1"/>
<dbReference type="Proteomes" id="UP000001608">
    <property type="component" value="Chromosome 15"/>
</dbReference>
<dbReference type="GO" id="GO:0005576">
    <property type="term" value="C:extracellular region"/>
    <property type="evidence" value="ECO:0007669"/>
    <property type="project" value="UniProtKB-KW"/>
</dbReference>
<dbReference type="GO" id="GO:0009277">
    <property type="term" value="C:fungal-type cell wall"/>
    <property type="evidence" value="ECO:0007669"/>
    <property type="project" value="TreeGrafter"/>
</dbReference>
<dbReference type="GO" id="GO:0000324">
    <property type="term" value="C:fungal-type vacuole"/>
    <property type="evidence" value="ECO:0007669"/>
    <property type="project" value="TreeGrafter"/>
</dbReference>
<dbReference type="GO" id="GO:0098552">
    <property type="term" value="C:side of membrane"/>
    <property type="evidence" value="ECO:0007669"/>
    <property type="project" value="UniProtKB-KW"/>
</dbReference>
<dbReference type="GO" id="GO:0005199">
    <property type="term" value="F:structural constituent of cell wall"/>
    <property type="evidence" value="ECO:0007669"/>
    <property type="project" value="TreeGrafter"/>
</dbReference>
<dbReference type="GO" id="GO:0031505">
    <property type="term" value="P:fungal-type cell wall organization"/>
    <property type="evidence" value="ECO:0007669"/>
    <property type="project" value="TreeGrafter"/>
</dbReference>
<dbReference type="InterPro" id="IPR000992">
    <property type="entry name" value="SRP1_TIP1"/>
</dbReference>
<dbReference type="InterPro" id="IPR050788">
    <property type="entry name" value="Yeast_SRP1/TIP1_CWP"/>
</dbReference>
<dbReference type="PANTHER" id="PTHR31002:SF34">
    <property type="entry name" value="CELL WALL PROTEIN CWP1-RELATED"/>
    <property type="match status" value="1"/>
</dbReference>
<dbReference type="PANTHER" id="PTHR31002">
    <property type="entry name" value="SERIPAUPERIN"/>
    <property type="match status" value="1"/>
</dbReference>
<dbReference type="Pfam" id="PF00660">
    <property type="entry name" value="SRP1_TIP1"/>
    <property type="match status" value="1"/>
</dbReference>
<dbReference type="PROSITE" id="PS00724">
    <property type="entry name" value="SRP1_TIP1"/>
    <property type="match status" value="1"/>
</dbReference>
<evidence type="ECO:0000255" key="1"/>
<evidence type="ECO:0000256" key="2">
    <source>
        <dbReference type="SAM" id="MobiDB-lite"/>
    </source>
</evidence>
<evidence type="ECO:0000269" key="3">
    <source>
    </source>
</evidence>
<evidence type="ECO:0000305" key="4"/>
<organism>
    <name type="scientific">Saccharomyces cerevisiae (strain Kyokai no. 7 / NBRC 101557)</name>
    <name type="common">Baker's yeast</name>
    <dbReference type="NCBI Taxonomy" id="721032"/>
    <lineage>
        <taxon>Eukaryota</taxon>
        <taxon>Fungi</taxon>
        <taxon>Dikarya</taxon>
        <taxon>Ascomycota</taxon>
        <taxon>Saccharomycotina</taxon>
        <taxon>Saccharomycetes</taxon>
        <taxon>Saccharomycetales</taxon>
        <taxon>Saccharomycetaceae</taxon>
        <taxon>Saccharomyces</taxon>
    </lineage>
</organism>
<accession>Q8TGE1</accession>
<accession>G2WM83</accession>
<accession>Q76C74</accession>
<keyword id="KW-0134">Cell wall</keyword>
<keyword id="KW-0961">Cell wall biogenesis/degradation</keyword>
<keyword id="KW-0325">Glycoprotein</keyword>
<keyword id="KW-0336">GPI-anchor</keyword>
<keyword id="KW-0449">Lipoprotein</keyword>
<keyword id="KW-0472">Membrane</keyword>
<keyword id="KW-0964">Secreted</keyword>
<keyword id="KW-0732">Signal</keyword>
<name>AWA1_YEASK</name>
<protein>
    <recommendedName>
        <fullName>Cell wall protein AWA1</fullName>
    </recommendedName>
</protein>
<feature type="signal peptide" evidence="1">
    <location>
        <begin position="1"/>
        <end position="23"/>
    </location>
</feature>
<feature type="chain" id="PRO_0000268175" description="Cell wall protein AWA1">
    <location>
        <begin position="24"/>
        <end position="1692"/>
    </location>
</feature>
<feature type="propeptide" id="PRO_0000268176" description="Removed in mature form" evidence="1">
    <location>
        <begin position="1693"/>
        <end position="1713"/>
    </location>
</feature>
<feature type="region of interest" description="Disordered" evidence="2">
    <location>
        <begin position="80"/>
        <end position="117"/>
    </location>
</feature>
<feature type="region of interest" description="Disordered" evidence="2">
    <location>
        <begin position="256"/>
        <end position="327"/>
    </location>
</feature>
<feature type="region of interest" description="Disordered" evidence="2">
    <location>
        <begin position="359"/>
        <end position="939"/>
    </location>
</feature>
<feature type="region of interest" description="Disordered" evidence="2">
    <location>
        <begin position="1582"/>
        <end position="1603"/>
    </location>
</feature>
<feature type="compositionally biased region" description="Low complexity" evidence="2">
    <location>
        <begin position="256"/>
        <end position="275"/>
    </location>
</feature>
<feature type="compositionally biased region" description="Polar residues" evidence="2">
    <location>
        <begin position="276"/>
        <end position="327"/>
    </location>
</feature>
<feature type="compositionally biased region" description="Polar residues" evidence="2">
    <location>
        <begin position="359"/>
        <end position="368"/>
    </location>
</feature>
<feature type="compositionally biased region" description="Low complexity" evidence="2">
    <location>
        <begin position="374"/>
        <end position="939"/>
    </location>
</feature>
<feature type="lipid moiety-binding region" description="GPI-anchor amidated alanine" evidence="1">
    <location>
        <position position="1692"/>
    </location>
</feature>
<feature type="glycosylation site" description="N-linked (GlcNAc...) asparagine" evidence="1">
    <location>
        <position position="34"/>
    </location>
</feature>
<feature type="glycosylation site" description="N-linked (GlcNAc...) asparagine" evidence="1">
    <location>
        <position position="1133"/>
    </location>
</feature>
<feature type="glycosylation site" description="N-linked (GlcNAc...) asparagine" evidence="1">
    <location>
        <position position="1241"/>
    </location>
</feature>
<feature type="glycosylation site" description="N-linked (GlcNAc...) asparagine" evidence="1">
    <location>
        <position position="1278"/>
    </location>
</feature>
<feature type="sequence variant" description="In strain: Kyokai no. 701, non-foaming mutant derivative of Kyokai no. 7.">
    <location>
        <begin position="1036"/>
        <end position="1713"/>
    </location>
</feature>